<dbReference type="EMBL" id="AL096692">
    <property type="status" value="NOT_ANNOTATED_CDS"/>
    <property type="molecule type" value="Genomic_DNA"/>
</dbReference>
<dbReference type="EMBL" id="AL161574">
    <property type="status" value="NOT_ANNOTATED_CDS"/>
    <property type="molecule type" value="Genomic_DNA"/>
</dbReference>
<dbReference type="EMBL" id="CP002687">
    <property type="protein sequence ID" value="AEE85610.1"/>
    <property type="molecule type" value="Genomic_DNA"/>
</dbReference>
<dbReference type="RefSeq" id="NP_001031745.1">
    <property type="nucleotide sequence ID" value="NM_001036668.2"/>
</dbReference>
<dbReference type="SMR" id="P82737"/>
<dbReference type="PaxDb" id="3702-AT4G29273.1"/>
<dbReference type="EnsemblPlants" id="AT4G29273.1">
    <property type="protein sequence ID" value="AT4G29273.1"/>
    <property type="gene ID" value="AT4G29273"/>
</dbReference>
<dbReference type="GeneID" id="3770553"/>
<dbReference type="Gramene" id="AT4G29273.1">
    <property type="protein sequence ID" value="AT4G29273.1"/>
    <property type="gene ID" value="AT4G29273"/>
</dbReference>
<dbReference type="KEGG" id="ath:AT4G29273"/>
<dbReference type="Araport" id="AT4G29273"/>
<dbReference type="TAIR" id="AT4G29273">
    <property type="gene designation" value="LCR23"/>
</dbReference>
<dbReference type="HOGENOM" id="CLU_182511_1_0_1"/>
<dbReference type="InParanoid" id="P82737"/>
<dbReference type="OMA" id="CVCTYNC"/>
<dbReference type="OrthoDB" id="1020632at2759"/>
<dbReference type="PhylomeDB" id="P82737"/>
<dbReference type="PRO" id="PR:P82737"/>
<dbReference type="Proteomes" id="UP000006548">
    <property type="component" value="Chromosome 4"/>
</dbReference>
<dbReference type="ExpressionAtlas" id="P82737">
    <property type="expression patterns" value="baseline and differential"/>
</dbReference>
<dbReference type="GO" id="GO:0005576">
    <property type="term" value="C:extracellular region"/>
    <property type="evidence" value="ECO:0007669"/>
    <property type="project" value="UniProtKB-SubCell"/>
</dbReference>
<dbReference type="GO" id="GO:0050832">
    <property type="term" value="P:defense response to fungus"/>
    <property type="evidence" value="ECO:0007669"/>
    <property type="project" value="UniProtKB-KW"/>
</dbReference>
<dbReference type="GO" id="GO:0031640">
    <property type="term" value="P:killing of cells of another organism"/>
    <property type="evidence" value="ECO:0007669"/>
    <property type="project" value="UniProtKB-KW"/>
</dbReference>
<dbReference type="InterPro" id="IPR010851">
    <property type="entry name" value="DEFL"/>
</dbReference>
<dbReference type="PANTHER" id="PTHR33830:SF36">
    <property type="entry name" value="DEFENSIN-LIKE PROTEIN 155-RELATED"/>
    <property type="match status" value="1"/>
</dbReference>
<dbReference type="PANTHER" id="PTHR33830">
    <property type="entry name" value="DEFENSIN-LIKE PROTEIN 184-RELATED"/>
    <property type="match status" value="1"/>
</dbReference>
<dbReference type="Pfam" id="PF07333">
    <property type="entry name" value="SLR1-BP"/>
    <property type="match status" value="1"/>
</dbReference>
<gene>
    <name type="primary">LCR23</name>
    <name type="ordered locus">At4g29273</name>
    <name type="ORF">F17A13</name>
</gene>
<accession>P82737</accession>
<feature type="signal peptide" evidence="2">
    <location>
        <begin position="1"/>
        <end position="24"/>
    </location>
</feature>
<feature type="chain" id="PRO_0000017264" description="Putative defensin-like protein 158">
    <location>
        <begin position="25"/>
        <end position="77"/>
    </location>
</feature>
<feature type="disulfide bond" evidence="1">
    <location>
        <begin position="31"/>
        <end position="77"/>
    </location>
</feature>
<feature type="disulfide bond" evidence="1">
    <location>
        <begin position="41"/>
        <end position="60"/>
    </location>
</feature>
<feature type="disulfide bond" evidence="1">
    <location>
        <begin position="46"/>
        <end position="71"/>
    </location>
</feature>
<feature type="disulfide bond" evidence="1">
    <location>
        <begin position="50"/>
        <end position="73"/>
    </location>
</feature>
<sequence length="77" mass="8532">MANISWSHFLILMLVFSVVKKGKGDQTDKYCTIIIDPRTPCDLVDCRLSCYTGYNGVGKCIASKASRTPNCVCTYNC</sequence>
<comment type="subcellular location">
    <subcellularLocation>
        <location evidence="1">Secreted</location>
    </subcellularLocation>
</comment>
<comment type="similarity">
    <text evidence="3">Belongs to the DEFL family.</text>
</comment>
<protein>
    <recommendedName>
        <fullName>Putative defensin-like protein 158</fullName>
    </recommendedName>
    <alternativeName>
        <fullName>Putative low-molecular-weight cysteine-rich protein 23</fullName>
        <shortName>Protein LCR23</shortName>
    </alternativeName>
</protein>
<keyword id="KW-0929">Antimicrobial</keyword>
<keyword id="KW-1015">Disulfide bond</keyword>
<keyword id="KW-0295">Fungicide</keyword>
<keyword id="KW-0611">Plant defense</keyword>
<keyword id="KW-1185">Reference proteome</keyword>
<keyword id="KW-0964">Secreted</keyword>
<keyword id="KW-0732">Signal</keyword>
<organism evidence="3">
    <name type="scientific">Arabidopsis thaliana</name>
    <name type="common">Mouse-ear cress</name>
    <dbReference type="NCBI Taxonomy" id="3702"/>
    <lineage>
        <taxon>Eukaryota</taxon>
        <taxon>Viridiplantae</taxon>
        <taxon>Streptophyta</taxon>
        <taxon>Embryophyta</taxon>
        <taxon>Tracheophyta</taxon>
        <taxon>Spermatophyta</taxon>
        <taxon>Magnoliopsida</taxon>
        <taxon>eudicotyledons</taxon>
        <taxon>Gunneridae</taxon>
        <taxon>Pentapetalae</taxon>
        <taxon>rosids</taxon>
        <taxon>malvids</taxon>
        <taxon>Brassicales</taxon>
        <taxon>Brassicaceae</taxon>
        <taxon>Camelineae</taxon>
        <taxon>Arabidopsis</taxon>
    </lineage>
</organism>
<proteinExistence type="inferred from homology"/>
<reference evidence="3" key="1">
    <citation type="journal article" date="1999" name="Nature">
        <title>Sequence and analysis of chromosome 4 of the plant Arabidopsis thaliana.</title>
        <authorList>
            <person name="Mayer K.F.X."/>
            <person name="Schueller C."/>
            <person name="Wambutt R."/>
            <person name="Murphy G."/>
            <person name="Volckaert G."/>
            <person name="Pohl T."/>
            <person name="Duesterhoeft A."/>
            <person name="Stiekema W."/>
            <person name="Entian K.-D."/>
            <person name="Terryn N."/>
            <person name="Harris B."/>
            <person name="Ansorge W."/>
            <person name="Brandt P."/>
            <person name="Grivell L.A."/>
            <person name="Rieger M."/>
            <person name="Weichselgartner M."/>
            <person name="de Simone V."/>
            <person name="Obermaier B."/>
            <person name="Mache R."/>
            <person name="Mueller M."/>
            <person name="Kreis M."/>
            <person name="Delseny M."/>
            <person name="Puigdomenech P."/>
            <person name="Watson M."/>
            <person name="Schmidtheini T."/>
            <person name="Reichert B."/>
            <person name="Portetelle D."/>
            <person name="Perez-Alonso M."/>
            <person name="Boutry M."/>
            <person name="Bancroft I."/>
            <person name="Vos P."/>
            <person name="Hoheisel J."/>
            <person name="Zimmermann W."/>
            <person name="Wedler H."/>
            <person name="Ridley P."/>
            <person name="Langham S.-A."/>
            <person name="McCullagh B."/>
            <person name="Bilham L."/>
            <person name="Robben J."/>
            <person name="van der Schueren J."/>
            <person name="Grymonprez B."/>
            <person name="Chuang Y.-J."/>
            <person name="Vandenbussche F."/>
            <person name="Braeken M."/>
            <person name="Weltjens I."/>
            <person name="Voet M."/>
            <person name="Bastiaens I."/>
            <person name="Aert R."/>
            <person name="Defoor E."/>
            <person name="Weitzenegger T."/>
            <person name="Bothe G."/>
            <person name="Ramsperger U."/>
            <person name="Hilbert H."/>
            <person name="Braun M."/>
            <person name="Holzer E."/>
            <person name="Brandt A."/>
            <person name="Peters S."/>
            <person name="van Staveren M."/>
            <person name="Dirkse W."/>
            <person name="Mooijman P."/>
            <person name="Klein Lankhorst R."/>
            <person name="Rose M."/>
            <person name="Hauf J."/>
            <person name="Koetter P."/>
            <person name="Berneiser S."/>
            <person name="Hempel S."/>
            <person name="Feldpausch M."/>
            <person name="Lamberth S."/>
            <person name="Van den Daele H."/>
            <person name="De Keyser A."/>
            <person name="Buysshaert C."/>
            <person name="Gielen J."/>
            <person name="Villarroel R."/>
            <person name="De Clercq R."/>
            <person name="van Montagu M."/>
            <person name="Rogers J."/>
            <person name="Cronin A."/>
            <person name="Quail M.A."/>
            <person name="Bray-Allen S."/>
            <person name="Clark L."/>
            <person name="Doggett J."/>
            <person name="Hall S."/>
            <person name="Kay M."/>
            <person name="Lennard N."/>
            <person name="McLay K."/>
            <person name="Mayes R."/>
            <person name="Pettett A."/>
            <person name="Rajandream M.A."/>
            <person name="Lyne M."/>
            <person name="Benes V."/>
            <person name="Rechmann S."/>
            <person name="Borkova D."/>
            <person name="Bloecker H."/>
            <person name="Scharfe M."/>
            <person name="Grimm M."/>
            <person name="Loehnert T.-H."/>
            <person name="Dose S."/>
            <person name="de Haan M."/>
            <person name="Maarse A.C."/>
            <person name="Schaefer M."/>
            <person name="Mueller-Auer S."/>
            <person name="Gabel C."/>
            <person name="Fuchs M."/>
            <person name="Fartmann B."/>
            <person name="Granderath K."/>
            <person name="Dauner D."/>
            <person name="Herzl A."/>
            <person name="Neumann S."/>
            <person name="Argiriou A."/>
            <person name="Vitale D."/>
            <person name="Liguori R."/>
            <person name="Piravandi E."/>
            <person name="Massenet O."/>
            <person name="Quigley F."/>
            <person name="Clabauld G."/>
            <person name="Muendlein A."/>
            <person name="Felber R."/>
            <person name="Schnabl S."/>
            <person name="Hiller R."/>
            <person name="Schmidt W."/>
            <person name="Lecharny A."/>
            <person name="Aubourg S."/>
            <person name="Chefdor F."/>
            <person name="Cooke R."/>
            <person name="Berger C."/>
            <person name="Monfort A."/>
            <person name="Casacuberta E."/>
            <person name="Gibbons T."/>
            <person name="Weber N."/>
            <person name="Vandenbol M."/>
            <person name="Bargues M."/>
            <person name="Terol J."/>
            <person name="Torres A."/>
            <person name="Perez-Perez A."/>
            <person name="Purnelle B."/>
            <person name="Bent E."/>
            <person name="Johnson S."/>
            <person name="Tacon D."/>
            <person name="Jesse T."/>
            <person name="Heijnen L."/>
            <person name="Schwarz S."/>
            <person name="Scholler P."/>
            <person name="Heber S."/>
            <person name="Francs P."/>
            <person name="Bielke C."/>
            <person name="Frishman D."/>
            <person name="Haase D."/>
            <person name="Lemcke K."/>
            <person name="Mewes H.-W."/>
            <person name="Stocker S."/>
            <person name="Zaccaria P."/>
            <person name="Bevan M."/>
            <person name="Wilson R.K."/>
            <person name="de la Bastide M."/>
            <person name="Habermann K."/>
            <person name="Parnell L."/>
            <person name="Dedhia N."/>
            <person name="Gnoj L."/>
            <person name="Schutz K."/>
            <person name="Huang E."/>
            <person name="Spiegel L."/>
            <person name="Sekhon M."/>
            <person name="Murray J."/>
            <person name="Sheet P."/>
            <person name="Cordes M."/>
            <person name="Abu-Threideh J."/>
            <person name="Stoneking T."/>
            <person name="Kalicki J."/>
            <person name="Graves T."/>
            <person name="Harmon G."/>
            <person name="Edwards J."/>
            <person name="Latreille P."/>
            <person name="Courtney L."/>
            <person name="Cloud J."/>
            <person name="Abbott A."/>
            <person name="Scott K."/>
            <person name="Johnson D."/>
            <person name="Minx P."/>
            <person name="Bentley D."/>
            <person name="Fulton B."/>
            <person name="Miller N."/>
            <person name="Greco T."/>
            <person name="Kemp K."/>
            <person name="Kramer J."/>
            <person name="Fulton L."/>
            <person name="Mardis E."/>
            <person name="Dante M."/>
            <person name="Pepin K."/>
            <person name="Hillier L.W."/>
            <person name="Nelson J."/>
            <person name="Spieth J."/>
            <person name="Ryan E."/>
            <person name="Andrews S."/>
            <person name="Geisel C."/>
            <person name="Layman D."/>
            <person name="Du H."/>
            <person name="Ali J."/>
            <person name="Berghoff A."/>
            <person name="Jones K."/>
            <person name="Drone K."/>
            <person name="Cotton M."/>
            <person name="Joshu C."/>
            <person name="Antonoiu B."/>
            <person name="Zidanic M."/>
            <person name="Strong C."/>
            <person name="Sun H."/>
            <person name="Lamar B."/>
            <person name="Yordan C."/>
            <person name="Ma P."/>
            <person name="Zhong J."/>
            <person name="Preston R."/>
            <person name="Vil D."/>
            <person name="Shekher M."/>
            <person name="Matero A."/>
            <person name="Shah R."/>
            <person name="Swaby I.K."/>
            <person name="O'Shaughnessy A."/>
            <person name="Rodriguez M."/>
            <person name="Hoffman J."/>
            <person name="Till S."/>
            <person name="Granat S."/>
            <person name="Shohdy N."/>
            <person name="Hasegawa A."/>
            <person name="Hameed A."/>
            <person name="Lodhi M."/>
            <person name="Johnson A."/>
            <person name="Chen E."/>
            <person name="Marra M.A."/>
            <person name="Martienssen R."/>
            <person name="McCombie W.R."/>
        </authorList>
    </citation>
    <scope>NUCLEOTIDE SEQUENCE [LARGE SCALE GENOMIC DNA]</scope>
    <source>
        <strain>cv. Columbia</strain>
    </source>
</reference>
<reference key="2">
    <citation type="journal article" date="2017" name="Plant J.">
        <title>Araport11: a complete reannotation of the Arabidopsis thaliana reference genome.</title>
        <authorList>
            <person name="Cheng C.Y."/>
            <person name="Krishnakumar V."/>
            <person name="Chan A.P."/>
            <person name="Thibaud-Nissen F."/>
            <person name="Schobel S."/>
            <person name="Town C.D."/>
        </authorList>
    </citation>
    <scope>GENOME REANNOTATION</scope>
    <source>
        <strain>cv. Columbia</strain>
    </source>
</reference>
<reference evidence="3" key="3">
    <citation type="journal article" date="2001" name="Plant Mol. Biol.">
        <title>Two large Arabidopsis thaliana gene families are homologous to the Brassica gene superfamily that encodes pollen coat proteins and the male component of the self-incompatibility response.</title>
        <authorList>
            <person name="Vanoosthuyse V."/>
            <person name="Miege C."/>
            <person name="Dumas C."/>
            <person name="Cock J.M."/>
        </authorList>
    </citation>
    <scope>IDENTIFICATION</scope>
</reference>
<reference key="4">
    <citation type="journal article" date="2005" name="Plant Physiol.">
        <title>Genome organization of more than 300 defensin-like genes in Arabidopsis.</title>
        <authorList>
            <person name="Silverstein K.A.T."/>
            <person name="Graham M.A."/>
            <person name="Paape T.D."/>
            <person name="VandenBosch K.A."/>
        </authorList>
    </citation>
    <scope>GENE FAMILY</scope>
</reference>
<name>DF158_ARATH</name>
<evidence type="ECO:0000250" key="1"/>
<evidence type="ECO:0000255" key="2"/>
<evidence type="ECO:0000305" key="3"/>